<organism>
    <name type="scientific">Guillardia theta</name>
    <name type="common">Cryptophyte</name>
    <name type="synonym">Cryptomonas phi</name>
    <dbReference type="NCBI Taxonomy" id="55529"/>
    <lineage>
        <taxon>Eukaryota</taxon>
        <taxon>Cryptophyceae</taxon>
        <taxon>Pyrenomonadales</taxon>
        <taxon>Geminigeraceae</taxon>
        <taxon>Guillardia</taxon>
    </lineage>
</organism>
<gene>
    <name type="primary">rps8</name>
</gene>
<proteinExistence type="inferred from homology"/>
<feature type="chain" id="PRO_0000126572" description="Small ribosomal subunit protein uS8c">
    <location>
        <begin position="1"/>
        <end position="132"/>
    </location>
</feature>
<comment type="function">
    <text evidence="1">One of the primary rRNA binding proteins, it binds directly to 16S rRNA central domain where it helps coordinate assembly of the platform of the 30S subunit.</text>
</comment>
<comment type="subunit">
    <text evidence="1">Part of the 30S ribosomal subunit.</text>
</comment>
<comment type="subcellular location">
    <subcellularLocation>
        <location>Plastid</location>
        <location>Chloroplast</location>
    </subcellularLocation>
</comment>
<comment type="similarity">
    <text evidence="2">Belongs to the universal ribosomal protein uS8 family.</text>
</comment>
<dbReference type="EMBL" id="AF041468">
    <property type="protein sequence ID" value="AAC35716.1"/>
    <property type="molecule type" value="Genomic_DNA"/>
</dbReference>
<dbReference type="RefSeq" id="NP_050782.1">
    <property type="nucleotide sequence ID" value="NC_000926.1"/>
</dbReference>
<dbReference type="SMR" id="O46907"/>
<dbReference type="GeneID" id="857090"/>
<dbReference type="HOGENOM" id="CLU_098428_0_2_1"/>
<dbReference type="OMA" id="NSAYHDT"/>
<dbReference type="GO" id="GO:0009507">
    <property type="term" value="C:chloroplast"/>
    <property type="evidence" value="ECO:0007669"/>
    <property type="project" value="UniProtKB-SubCell"/>
</dbReference>
<dbReference type="GO" id="GO:1990904">
    <property type="term" value="C:ribonucleoprotein complex"/>
    <property type="evidence" value="ECO:0007669"/>
    <property type="project" value="UniProtKB-KW"/>
</dbReference>
<dbReference type="GO" id="GO:0005840">
    <property type="term" value="C:ribosome"/>
    <property type="evidence" value="ECO:0007669"/>
    <property type="project" value="UniProtKB-KW"/>
</dbReference>
<dbReference type="GO" id="GO:0019843">
    <property type="term" value="F:rRNA binding"/>
    <property type="evidence" value="ECO:0007669"/>
    <property type="project" value="UniProtKB-UniRule"/>
</dbReference>
<dbReference type="GO" id="GO:0003735">
    <property type="term" value="F:structural constituent of ribosome"/>
    <property type="evidence" value="ECO:0007669"/>
    <property type="project" value="InterPro"/>
</dbReference>
<dbReference type="GO" id="GO:0006412">
    <property type="term" value="P:translation"/>
    <property type="evidence" value="ECO:0007669"/>
    <property type="project" value="UniProtKB-UniRule"/>
</dbReference>
<dbReference type="FunFam" id="3.30.1370.30:FF:000002">
    <property type="entry name" value="30S ribosomal protein S8"/>
    <property type="match status" value="1"/>
</dbReference>
<dbReference type="FunFam" id="3.30.1490.10:FF:000001">
    <property type="entry name" value="30S ribosomal protein S8"/>
    <property type="match status" value="1"/>
</dbReference>
<dbReference type="Gene3D" id="3.30.1370.30">
    <property type="match status" value="1"/>
</dbReference>
<dbReference type="Gene3D" id="3.30.1490.10">
    <property type="match status" value="1"/>
</dbReference>
<dbReference type="HAMAP" id="MF_01302_B">
    <property type="entry name" value="Ribosomal_uS8_B"/>
    <property type="match status" value="1"/>
</dbReference>
<dbReference type="InterPro" id="IPR000630">
    <property type="entry name" value="Ribosomal_uS8"/>
</dbReference>
<dbReference type="InterPro" id="IPR047863">
    <property type="entry name" value="Ribosomal_uS8_CS"/>
</dbReference>
<dbReference type="InterPro" id="IPR035987">
    <property type="entry name" value="Ribosomal_uS8_sf"/>
</dbReference>
<dbReference type="NCBIfam" id="NF001109">
    <property type="entry name" value="PRK00136.1"/>
    <property type="match status" value="1"/>
</dbReference>
<dbReference type="PANTHER" id="PTHR11758">
    <property type="entry name" value="40S RIBOSOMAL PROTEIN S15A"/>
    <property type="match status" value="1"/>
</dbReference>
<dbReference type="Pfam" id="PF00410">
    <property type="entry name" value="Ribosomal_S8"/>
    <property type="match status" value="1"/>
</dbReference>
<dbReference type="SUPFAM" id="SSF56047">
    <property type="entry name" value="Ribosomal protein S8"/>
    <property type="match status" value="1"/>
</dbReference>
<dbReference type="PROSITE" id="PS00053">
    <property type="entry name" value="RIBOSOMAL_S8"/>
    <property type="match status" value="1"/>
</dbReference>
<reference key="1">
    <citation type="journal article" date="1997" name="Biochem. Mol. Biol. Int.">
        <title>The large ribosomal protein gene cluster of a cryptomonad plastid: gene organization, sequence and evolutionary implications.</title>
        <authorList>
            <person name="Wang S.L."/>
            <person name="Liu X.-Q."/>
            <person name="Douglas S.E."/>
        </authorList>
    </citation>
    <scope>NUCLEOTIDE SEQUENCE [GENOMIC DNA]</scope>
</reference>
<reference key="2">
    <citation type="journal article" date="1999" name="J. Mol. Evol.">
        <title>The plastid genome of the cryptophyte alga, Guillardia theta: complete sequence and conserved synteny groups confirm its common ancestry with red algae.</title>
        <authorList>
            <person name="Douglas S.E."/>
            <person name="Penny S.L."/>
        </authorList>
    </citation>
    <scope>NUCLEOTIDE SEQUENCE [LARGE SCALE GENOMIC DNA]</scope>
</reference>
<evidence type="ECO:0000250" key="1"/>
<evidence type="ECO:0000305" key="2"/>
<name>RR8_GUITH</name>
<keyword id="KW-0150">Chloroplast</keyword>
<keyword id="KW-0934">Plastid</keyword>
<keyword id="KW-0687">Ribonucleoprotein</keyword>
<keyword id="KW-0689">Ribosomal protein</keyword>
<keyword id="KW-0694">RNA-binding</keyword>
<keyword id="KW-0699">rRNA-binding</keyword>
<protein>
    <recommendedName>
        <fullName evidence="2">Small ribosomal subunit protein uS8c</fullName>
    </recommendedName>
    <alternativeName>
        <fullName>30S ribosomal protein S8, chloroplastic</fullName>
    </alternativeName>
</protein>
<sequence length="132" mass="14638">MTNDTVSDMLTRVRNANLAKHQVVQVPATKMTKSIAHVLLEEGFIESIEEVGLDINRQLLLSLKYKGREREPVINALKRISRPGLRVYANRKELPRVLGGLGIAVISTSKGVLTDTKARTQGLGGEVLCYIW</sequence>
<accession>O46907</accession>
<geneLocation type="chloroplast"/>